<comment type="miscellaneous">
    <text>This mu chain was isolated from a myeloma protein.</text>
</comment>
<reference key="1">
    <citation type="journal article" date="1977" name="Biochemistry">
        <title>Primary structure of the variable regions of two canine immunoglobulin heavy chains.</title>
        <authorList>
            <person name="Wasserman R.L."/>
            <person name="Capra J.D."/>
        </authorList>
    </citation>
    <scope>PROTEIN SEQUENCE OF 1-112</scope>
</reference>
<reference key="2">
    <citation type="journal article" date="1979" name="Mol. Immunol.">
        <title>The complete amino-acid sequence of a canine mu chain.</title>
        <authorList>
            <person name="McCumber L.J."/>
            <person name="Capra J.D."/>
        </authorList>
    </citation>
    <scope>PROTEIN SEQUENCE OF 113-117</scope>
</reference>
<feature type="chain" id="PRO_0000059857" description="Ig heavy chain V region MOO">
    <location>
        <begin position="1"/>
        <end position="117" status="greater than"/>
    </location>
</feature>
<feature type="domain" description="Ig-like">
    <location>
        <begin position="1"/>
        <end position="116"/>
    </location>
</feature>
<feature type="non-terminal residue">
    <location>
        <position position="117"/>
    </location>
</feature>
<organism>
    <name type="scientific">Canis lupus familiaris</name>
    <name type="common">Dog</name>
    <name type="synonym">Canis familiaris</name>
    <dbReference type="NCBI Taxonomy" id="9615"/>
    <lineage>
        <taxon>Eukaryota</taxon>
        <taxon>Metazoa</taxon>
        <taxon>Chordata</taxon>
        <taxon>Craniata</taxon>
        <taxon>Vertebrata</taxon>
        <taxon>Euteleostomi</taxon>
        <taxon>Mammalia</taxon>
        <taxon>Eutheria</taxon>
        <taxon>Laurasiatheria</taxon>
        <taxon>Carnivora</taxon>
        <taxon>Caniformia</taxon>
        <taxon>Canidae</taxon>
        <taxon>Canis</taxon>
    </lineage>
</organism>
<protein>
    <recommendedName>
        <fullName>Ig heavy chain V region MOO</fullName>
    </recommendedName>
</protein>
<name>HV02_CANLF</name>
<keyword id="KW-1064">Adaptive immunity</keyword>
<keyword id="KW-0903">Direct protein sequencing</keyword>
<keyword id="KW-0391">Immunity</keyword>
<keyword id="KW-1280">Immunoglobulin</keyword>
<keyword id="KW-1185">Reference proteome</keyword>
<dbReference type="PIR" id="A90403">
    <property type="entry name" value="MHDGMO"/>
</dbReference>
<dbReference type="SMR" id="P01785"/>
<dbReference type="FunCoup" id="P01785">
    <property type="interactions" value="26"/>
</dbReference>
<dbReference type="STRING" id="9615.ENSCAFP00000057201"/>
<dbReference type="InParanoid" id="P01785"/>
<dbReference type="Proteomes" id="UP000002254">
    <property type="component" value="Unplaced"/>
</dbReference>
<dbReference type="Proteomes" id="UP000694429">
    <property type="component" value="Unplaced"/>
</dbReference>
<dbReference type="Proteomes" id="UP000694542">
    <property type="component" value="Unplaced"/>
</dbReference>
<dbReference type="Proteomes" id="UP000805418">
    <property type="component" value="Unplaced"/>
</dbReference>
<dbReference type="GO" id="GO:0005576">
    <property type="term" value="C:extracellular region"/>
    <property type="evidence" value="ECO:0007669"/>
    <property type="project" value="UniProtKB-ARBA"/>
</dbReference>
<dbReference type="GO" id="GO:0019814">
    <property type="term" value="C:immunoglobulin complex"/>
    <property type="evidence" value="ECO:0007669"/>
    <property type="project" value="UniProtKB-KW"/>
</dbReference>
<dbReference type="GO" id="GO:0003823">
    <property type="term" value="F:antigen binding"/>
    <property type="evidence" value="ECO:0000318"/>
    <property type="project" value="GO_Central"/>
</dbReference>
<dbReference type="GO" id="GO:0016064">
    <property type="term" value="P:immunoglobulin mediated immune response"/>
    <property type="evidence" value="ECO:0000318"/>
    <property type="project" value="GO_Central"/>
</dbReference>
<dbReference type="FunFam" id="2.60.40.10:FF:001423">
    <property type="entry name" value="Ig heavy chain V region 5-84"/>
    <property type="match status" value="1"/>
</dbReference>
<dbReference type="Gene3D" id="2.60.40.10">
    <property type="entry name" value="Immunoglobulins"/>
    <property type="match status" value="1"/>
</dbReference>
<dbReference type="InterPro" id="IPR007110">
    <property type="entry name" value="Ig-like_dom"/>
</dbReference>
<dbReference type="InterPro" id="IPR036179">
    <property type="entry name" value="Ig-like_dom_sf"/>
</dbReference>
<dbReference type="InterPro" id="IPR013783">
    <property type="entry name" value="Ig-like_fold"/>
</dbReference>
<dbReference type="InterPro" id="IPR003599">
    <property type="entry name" value="Ig_sub"/>
</dbReference>
<dbReference type="InterPro" id="IPR013106">
    <property type="entry name" value="Ig_V-set"/>
</dbReference>
<dbReference type="InterPro" id="IPR050199">
    <property type="entry name" value="IgHV"/>
</dbReference>
<dbReference type="PANTHER" id="PTHR23266">
    <property type="entry name" value="IMMUNOGLOBULIN HEAVY CHAIN"/>
    <property type="match status" value="1"/>
</dbReference>
<dbReference type="Pfam" id="PF07686">
    <property type="entry name" value="V-set"/>
    <property type="match status" value="1"/>
</dbReference>
<dbReference type="SMART" id="SM00409">
    <property type="entry name" value="IG"/>
    <property type="match status" value="1"/>
</dbReference>
<dbReference type="SMART" id="SM00406">
    <property type="entry name" value="IGv"/>
    <property type="match status" value="1"/>
</dbReference>
<dbReference type="SUPFAM" id="SSF48726">
    <property type="entry name" value="Immunoglobulin"/>
    <property type="match status" value="1"/>
</dbReference>
<dbReference type="PROSITE" id="PS50835">
    <property type="entry name" value="IG_LIKE"/>
    <property type="match status" value="1"/>
</dbReference>
<sequence>EVKLVESGGDLVKPGGSLRLSCVASGFTFSSNGMSWVRQDPGEGLQWVADISSSGQTYYADAVKGRFSISRDNAKNTLYLQMEDLRVEDTAVYYCATEGDIEIPRYFGQGTIVTVSS</sequence>
<accession>P01785</accession>
<proteinExistence type="evidence at protein level"/>